<proteinExistence type="inferred from homology"/>
<feature type="chain" id="PRO_1000061970" description="Putative double-stranded DNA mimic protein YciU">
    <location>
        <begin position="1"/>
        <end position="109"/>
    </location>
</feature>
<dbReference type="EMBL" id="CP000802">
    <property type="protein sequence ID" value="ABV05688.1"/>
    <property type="molecule type" value="Genomic_DNA"/>
</dbReference>
<dbReference type="RefSeq" id="WP_000366959.1">
    <property type="nucleotide sequence ID" value="NC_009800.1"/>
</dbReference>
<dbReference type="SMR" id="A7ZZI4"/>
<dbReference type="KEGG" id="ecx:EcHS_A1357"/>
<dbReference type="HOGENOM" id="CLU_143392_0_0_6"/>
<dbReference type="Gene3D" id="3.10.450.140">
    <property type="entry name" value="dsDNA mimic, putative"/>
    <property type="match status" value="1"/>
</dbReference>
<dbReference type="HAMAP" id="MF_00680">
    <property type="entry name" value="Put_dsDNA_mimic"/>
    <property type="match status" value="1"/>
</dbReference>
<dbReference type="InterPro" id="IPR007376">
    <property type="entry name" value="dsDNA_mimic_put"/>
</dbReference>
<dbReference type="InterPro" id="IPR036763">
    <property type="entry name" value="Put_dsDNA_mimic_sf"/>
</dbReference>
<dbReference type="NCBIfam" id="NF003469">
    <property type="entry name" value="PRK05094.1"/>
    <property type="match status" value="1"/>
</dbReference>
<dbReference type="Pfam" id="PF04269">
    <property type="entry name" value="DUF440"/>
    <property type="match status" value="1"/>
</dbReference>
<dbReference type="PIRSF" id="PIRSF004916">
    <property type="entry name" value="UCP004916"/>
    <property type="match status" value="1"/>
</dbReference>
<dbReference type="SUPFAM" id="SSF102816">
    <property type="entry name" value="Putative dsDNA mimic"/>
    <property type="match status" value="1"/>
</dbReference>
<gene>
    <name evidence="1" type="primary">yciU</name>
    <name type="ordered locus">EcHS_A1357</name>
</gene>
<name>YCIU_ECOHS</name>
<comment type="function">
    <text evidence="1">May act as a double-stranded DNA (dsDNA) mimic. Probably regulates the activity of a dsDNA-binding protein.</text>
</comment>
<comment type="similarity">
    <text evidence="1">Belongs to the putative dsDNA mimic protein family.</text>
</comment>
<protein>
    <recommendedName>
        <fullName evidence="1">Putative double-stranded DNA mimic protein YciU</fullName>
    </recommendedName>
</protein>
<organism>
    <name type="scientific">Escherichia coli O9:H4 (strain HS)</name>
    <dbReference type="NCBI Taxonomy" id="331112"/>
    <lineage>
        <taxon>Bacteria</taxon>
        <taxon>Pseudomonadati</taxon>
        <taxon>Pseudomonadota</taxon>
        <taxon>Gammaproteobacteria</taxon>
        <taxon>Enterobacterales</taxon>
        <taxon>Enterobacteriaceae</taxon>
        <taxon>Escherichia</taxon>
    </lineage>
</organism>
<sequence>MDMDLNNRLTEDETLEQAYDIFLELAADNLDPADVLLFNLQFEERGGAELFDPAEDWQEHVDFDLNPDFFAEVVIGLADSEDGEINDVFARILLCREKDHKLCHIIWRE</sequence>
<reference key="1">
    <citation type="journal article" date="2008" name="J. Bacteriol.">
        <title>The pangenome structure of Escherichia coli: comparative genomic analysis of E. coli commensal and pathogenic isolates.</title>
        <authorList>
            <person name="Rasko D.A."/>
            <person name="Rosovitz M.J."/>
            <person name="Myers G.S.A."/>
            <person name="Mongodin E.F."/>
            <person name="Fricke W.F."/>
            <person name="Gajer P."/>
            <person name="Crabtree J."/>
            <person name="Sebaihia M."/>
            <person name="Thomson N.R."/>
            <person name="Chaudhuri R."/>
            <person name="Henderson I.R."/>
            <person name="Sperandio V."/>
            <person name="Ravel J."/>
        </authorList>
    </citation>
    <scope>NUCLEOTIDE SEQUENCE [LARGE SCALE GENOMIC DNA]</scope>
    <source>
        <strain>HS</strain>
    </source>
</reference>
<evidence type="ECO:0000255" key="1">
    <source>
        <dbReference type="HAMAP-Rule" id="MF_00680"/>
    </source>
</evidence>
<accession>A7ZZI4</accession>